<dbReference type="EMBL" id="CP001104">
    <property type="protein sequence ID" value="ACR73050.1"/>
    <property type="molecule type" value="Genomic_DNA"/>
</dbReference>
<dbReference type="RefSeq" id="WP_012740282.1">
    <property type="nucleotide sequence ID" value="NC_012778.1"/>
</dbReference>
<dbReference type="SMR" id="C4Z5E3"/>
<dbReference type="STRING" id="515620.EUBELI_02070"/>
<dbReference type="GeneID" id="41356704"/>
<dbReference type="KEGG" id="eel:EUBELI_02070"/>
<dbReference type="eggNOG" id="COG0230">
    <property type="taxonomic scope" value="Bacteria"/>
</dbReference>
<dbReference type="HOGENOM" id="CLU_129938_2_0_9"/>
<dbReference type="Proteomes" id="UP000001476">
    <property type="component" value="Chromosome"/>
</dbReference>
<dbReference type="GO" id="GO:1990904">
    <property type="term" value="C:ribonucleoprotein complex"/>
    <property type="evidence" value="ECO:0007669"/>
    <property type="project" value="UniProtKB-KW"/>
</dbReference>
<dbReference type="GO" id="GO:0005840">
    <property type="term" value="C:ribosome"/>
    <property type="evidence" value="ECO:0007669"/>
    <property type="project" value="UniProtKB-KW"/>
</dbReference>
<dbReference type="GO" id="GO:0003735">
    <property type="term" value="F:structural constituent of ribosome"/>
    <property type="evidence" value="ECO:0007669"/>
    <property type="project" value="InterPro"/>
</dbReference>
<dbReference type="GO" id="GO:0006412">
    <property type="term" value="P:translation"/>
    <property type="evidence" value="ECO:0007669"/>
    <property type="project" value="UniProtKB-UniRule"/>
</dbReference>
<dbReference type="FunFam" id="1.10.287.3980:FF:000001">
    <property type="entry name" value="Mitochondrial ribosomal protein L34"/>
    <property type="match status" value="1"/>
</dbReference>
<dbReference type="Gene3D" id="1.10.287.3980">
    <property type="match status" value="1"/>
</dbReference>
<dbReference type="HAMAP" id="MF_00391">
    <property type="entry name" value="Ribosomal_bL34"/>
    <property type="match status" value="1"/>
</dbReference>
<dbReference type="InterPro" id="IPR000271">
    <property type="entry name" value="Ribosomal_bL34"/>
</dbReference>
<dbReference type="InterPro" id="IPR020939">
    <property type="entry name" value="Ribosomal_bL34_CS"/>
</dbReference>
<dbReference type="NCBIfam" id="TIGR01030">
    <property type="entry name" value="rpmH_bact"/>
    <property type="match status" value="1"/>
</dbReference>
<dbReference type="PANTHER" id="PTHR14503:SF4">
    <property type="entry name" value="LARGE RIBOSOMAL SUBUNIT PROTEIN BL34M"/>
    <property type="match status" value="1"/>
</dbReference>
<dbReference type="PANTHER" id="PTHR14503">
    <property type="entry name" value="MITOCHONDRIAL RIBOSOMAL PROTEIN 34 FAMILY MEMBER"/>
    <property type="match status" value="1"/>
</dbReference>
<dbReference type="Pfam" id="PF00468">
    <property type="entry name" value="Ribosomal_L34"/>
    <property type="match status" value="1"/>
</dbReference>
<dbReference type="PROSITE" id="PS00784">
    <property type="entry name" value="RIBOSOMAL_L34"/>
    <property type="match status" value="1"/>
</dbReference>
<keyword id="KW-1185">Reference proteome</keyword>
<keyword id="KW-0687">Ribonucleoprotein</keyword>
<keyword id="KW-0689">Ribosomal protein</keyword>
<reference key="1">
    <citation type="journal article" date="2009" name="Proc. Natl. Acad. Sci. U.S.A.">
        <title>Characterizing a model human gut microbiota composed of members of its two dominant bacterial phyla.</title>
        <authorList>
            <person name="Mahowald M.A."/>
            <person name="Rey F.E."/>
            <person name="Seedorf H."/>
            <person name="Turnbaugh P.J."/>
            <person name="Fulton R.S."/>
            <person name="Wollam A."/>
            <person name="Shah N."/>
            <person name="Wang C."/>
            <person name="Magrini V."/>
            <person name="Wilson R.K."/>
            <person name="Cantarel B.L."/>
            <person name="Coutinho P.M."/>
            <person name="Henrissat B."/>
            <person name="Crock L.W."/>
            <person name="Russell A."/>
            <person name="Verberkmoes N.C."/>
            <person name="Hettich R.L."/>
            <person name="Gordon J.I."/>
        </authorList>
    </citation>
    <scope>NUCLEOTIDE SEQUENCE [LARGE SCALE GENOMIC DNA]</scope>
    <source>
        <strain>ATCC 27750 / DSM 3376 / VPI C15-48 / C15-B4</strain>
    </source>
</reference>
<proteinExistence type="inferred from homology"/>
<gene>
    <name evidence="1" type="primary">rpmH</name>
    <name type="ordered locus">EUBELI_02070</name>
</gene>
<comment type="similarity">
    <text evidence="1">Belongs to the bacterial ribosomal protein bL34 family.</text>
</comment>
<organism>
    <name type="scientific">Lachnospira eligens (strain ATCC 27750 / DSM 3376 / VPI C15-48 / C15-B4)</name>
    <name type="common">Eubacterium eligens</name>
    <dbReference type="NCBI Taxonomy" id="515620"/>
    <lineage>
        <taxon>Bacteria</taxon>
        <taxon>Bacillati</taxon>
        <taxon>Bacillota</taxon>
        <taxon>Clostridia</taxon>
        <taxon>Lachnospirales</taxon>
        <taxon>Lachnospiraceae</taxon>
        <taxon>Lachnospira</taxon>
    </lineage>
</organism>
<feature type="chain" id="PRO_1000205826" description="Large ribosomal subunit protein bL34">
    <location>
        <begin position="1"/>
        <end position="44"/>
    </location>
</feature>
<feature type="region of interest" description="Disordered" evidence="2">
    <location>
        <begin position="1"/>
        <end position="44"/>
    </location>
</feature>
<feature type="compositionally biased region" description="Basic residues" evidence="2">
    <location>
        <begin position="9"/>
        <end position="19"/>
    </location>
</feature>
<feature type="compositionally biased region" description="Basic residues" evidence="2">
    <location>
        <begin position="31"/>
        <end position="44"/>
    </location>
</feature>
<accession>C4Z5E3</accession>
<evidence type="ECO:0000255" key="1">
    <source>
        <dbReference type="HAMAP-Rule" id="MF_00391"/>
    </source>
</evidence>
<evidence type="ECO:0000256" key="2">
    <source>
        <dbReference type="SAM" id="MobiDB-lite"/>
    </source>
</evidence>
<evidence type="ECO:0000305" key="3"/>
<name>RL34_LACE2</name>
<protein>
    <recommendedName>
        <fullName evidence="1">Large ribosomal subunit protein bL34</fullName>
    </recommendedName>
    <alternativeName>
        <fullName evidence="3">50S ribosomal protein L34</fullName>
    </alternativeName>
</protein>
<sequence length="44" mass="5032">MKMTFQPKNRQRSKVHGFRSRMSTAGGRKVLSARRAKGRKKLSA</sequence>